<accession>O83488</accession>
<proteinExistence type="inferred from homology"/>
<evidence type="ECO:0000255" key="1">
    <source>
        <dbReference type="HAMAP-Rule" id="MF_00473"/>
    </source>
</evidence>
<evidence type="ECO:0000305" key="2"/>
<dbReference type="EC" id="5.3.1.9" evidence="1"/>
<dbReference type="EMBL" id="AE000520">
    <property type="protein sequence ID" value="AAC65462.1"/>
    <property type="molecule type" value="Genomic_DNA"/>
</dbReference>
<dbReference type="PIR" id="A71319">
    <property type="entry name" value="A71319"/>
</dbReference>
<dbReference type="RefSeq" id="WP_010881924.1">
    <property type="nucleotide sequence ID" value="NC_021490.2"/>
</dbReference>
<dbReference type="SMR" id="O83488"/>
<dbReference type="STRING" id="243276.TP_0475"/>
<dbReference type="EnsemblBacteria" id="AAC65462">
    <property type="protein sequence ID" value="AAC65462"/>
    <property type="gene ID" value="TP_0475"/>
</dbReference>
<dbReference type="KEGG" id="tpa:TP_0475"/>
<dbReference type="KEGG" id="tpw:TPANIC_0475"/>
<dbReference type="eggNOG" id="COG0166">
    <property type="taxonomic scope" value="Bacteria"/>
</dbReference>
<dbReference type="HOGENOM" id="CLU_017947_3_1_12"/>
<dbReference type="OrthoDB" id="140919at2"/>
<dbReference type="UniPathway" id="UPA00109">
    <property type="reaction ID" value="UER00181"/>
</dbReference>
<dbReference type="UniPathway" id="UPA00138"/>
<dbReference type="Proteomes" id="UP000000811">
    <property type="component" value="Chromosome"/>
</dbReference>
<dbReference type="GO" id="GO:0005829">
    <property type="term" value="C:cytosol"/>
    <property type="evidence" value="ECO:0007669"/>
    <property type="project" value="TreeGrafter"/>
</dbReference>
<dbReference type="GO" id="GO:0097367">
    <property type="term" value="F:carbohydrate derivative binding"/>
    <property type="evidence" value="ECO:0007669"/>
    <property type="project" value="InterPro"/>
</dbReference>
<dbReference type="GO" id="GO:0004347">
    <property type="term" value="F:glucose-6-phosphate isomerase activity"/>
    <property type="evidence" value="ECO:0007669"/>
    <property type="project" value="UniProtKB-UniRule"/>
</dbReference>
<dbReference type="GO" id="GO:0048029">
    <property type="term" value="F:monosaccharide binding"/>
    <property type="evidence" value="ECO:0007669"/>
    <property type="project" value="TreeGrafter"/>
</dbReference>
<dbReference type="GO" id="GO:0006094">
    <property type="term" value="P:gluconeogenesis"/>
    <property type="evidence" value="ECO:0007669"/>
    <property type="project" value="UniProtKB-UniRule"/>
</dbReference>
<dbReference type="GO" id="GO:0051156">
    <property type="term" value="P:glucose 6-phosphate metabolic process"/>
    <property type="evidence" value="ECO:0007669"/>
    <property type="project" value="TreeGrafter"/>
</dbReference>
<dbReference type="GO" id="GO:0006096">
    <property type="term" value="P:glycolytic process"/>
    <property type="evidence" value="ECO:0007669"/>
    <property type="project" value="UniProtKB-UniRule"/>
</dbReference>
<dbReference type="CDD" id="cd05015">
    <property type="entry name" value="SIS_PGI_1"/>
    <property type="match status" value="1"/>
</dbReference>
<dbReference type="CDD" id="cd05016">
    <property type="entry name" value="SIS_PGI_2"/>
    <property type="match status" value="1"/>
</dbReference>
<dbReference type="Gene3D" id="1.10.1390.10">
    <property type="match status" value="1"/>
</dbReference>
<dbReference type="Gene3D" id="3.40.50.10490">
    <property type="entry name" value="Glucose-6-phosphate isomerase like protein, domain 1"/>
    <property type="match status" value="2"/>
</dbReference>
<dbReference type="HAMAP" id="MF_00473">
    <property type="entry name" value="G6P_isomerase"/>
    <property type="match status" value="1"/>
</dbReference>
<dbReference type="InterPro" id="IPR001672">
    <property type="entry name" value="G6P_Isomerase"/>
</dbReference>
<dbReference type="InterPro" id="IPR023096">
    <property type="entry name" value="G6P_Isomerase_C"/>
</dbReference>
<dbReference type="InterPro" id="IPR018189">
    <property type="entry name" value="Phosphoglucose_isomerase_CS"/>
</dbReference>
<dbReference type="InterPro" id="IPR046348">
    <property type="entry name" value="SIS_dom_sf"/>
</dbReference>
<dbReference type="InterPro" id="IPR035476">
    <property type="entry name" value="SIS_PGI_1"/>
</dbReference>
<dbReference type="InterPro" id="IPR035482">
    <property type="entry name" value="SIS_PGI_2"/>
</dbReference>
<dbReference type="NCBIfam" id="NF010695">
    <property type="entry name" value="PRK14095.1"/>
    <property type="match status" value="1"/>
</dbReference>
<dbReference type="PANTHER" id="PTHR11469">
    <property type="entry name" value="GLUCOSE-6-PHOSPHATE ISOMERASE"/>
    <property type="match status" value="1"/>
</dbReference>
<dbReference type="PANTHER" id="PTHR11469:SF1">
    <property type="entry name" value="GLUCOSE-6-PHOSPHATE ISOMERASE"/>
    <property type="match status" value="1"/>
</dbReference>
<dbReference type="Pfam" id="PF00342">
    <property type="entry name" value="PGI"/>
    <property type="match status" value="1"/>
</dbReference>
<dbReference type="PRINTS" id="PR00662">
    <property type="entry name" value="G6PISOMERASE"/>
</dbReference>
<dbReference type="SUPFAM" id="SSF53697">
    <property type="entry name" value="SIS domain"/>
    <property type="match status" value="1"/>
</dbReference>
<dbReference type="PROSITE" id="PS00174">
    <property type="entry name" value="P_GLUCOSE_ISOMERASE_2"/>
    <property type="match status" value="1"/>
</dbReference>
<dbReference type="PROSITE" id="PS51463">
    <property type="entry name" value="P_GLUCOSE_ISOMERASE_3"/>
    <property type="match status" value="1"/>
</dbReference>
<name>G6PI_TREPA</name>
<keyword id="KW-0963">Cytoplasm</keyword>
<keyword id="KW-0312">Gluconeogenesis</keyword>
<keyword id="KW-0324">Glycolysis</keyword>
<keyword id="KW-0413">Isomerase</keyword>
<keyword id="KW-1185">Reference proteome</keyword>
<organism>
    <name type="scientific">Treponema pallidum (strain Nichols)</name>
    <dbReference type="NCBI Taxonomy" id="243276"/>
    <lineage>
        <taxon>Bacteria</taxon>
        <taxon>Pseudomonadati</taxon>
        <taxon>Spirochaetota</taxon>
        <taxon>Spirochaetia</taxon>
        <taxon>Spirochaetales</taxon>
        <taxon>Treponemataceae</taxon>
        <taxon>Treponema</taxon>
    </lineage>
</organism>
<feature type="chain" id="PRO_0000180761" description="Glucose-6-phosphate isomerase">
    <location>
        <begin position="1"/>
        <end position="535"/>
    </location>
</feature>
<feature type="active site" description="Proton donor" evidence="1">
    <location>
        <position position="359"/>
    </location>
</feature>
<feature type="active site" evidence="1">
    <location>
        <position position="390"/>
    </location>
</feature>
<feature type="active site" evidence="1">
    <location>
        <position position="505"/>
    </location>
</feature>
<reference key="1">
    <citation type="journal article" date="1998" name="Science">
        <title>Complete genome sequence of Treponema pallidum, the syphilis spirochete.</title>
        <authorList>
            <person name="Fraser C.M."/>
            <person name="Norris S.J."/>
            <person name="Weinstock G.M."/>
            <person name="White O."/>
            <person name="Sutton G.G."/>
            <person name="Dodson R.J."/>
            <person name="Gwinn M.L."/>
            <person name="Hickey E.K."/>
            <person name="Clayton R.A."/>
            <person name="Ketchum K.A."/>
            <person name="Sodergren E."/>
            <person name="Hardham J.M."/>
            <person name="McLeod M.P."/>
            <person name="Salzberg S.L."/>
            <person name="Peterson J.D."/>
            <person name="Khalak H.G."/>
            <person name="Richardson D.L."/>
            <person name="Howell J.K."/>
            <person name="Chidambaram M."/>
            <person name="Utterback T.R."/>
            <person name="McDonald L.A."/>
            <person name="Artiach P."/>
            <person name="Bowman C."/>
            <person name="Cotton M.D."/>
            <person name="Fujii C."/>
            <person name="Garland S.A."/>
            <person name="Hatch B."/>
            <person name="Horst K."/>
            <person name="Roberts K.M."/>
            <person name="Sandusky M."/>
            <person name="Weidman J.F."/>
            <person name="Smith H.O."/>
            <person name="Venter J.C."/>
        </authorList>
    </citation>
    <scope>NUCLEOTIDE SEQUENCE [LARGE SCALE GENOMIC DNA]</scope>
    <source>
        <strain>Nichols</strain>
    </source>
</reference>
<comment type="function">
    <text evidence="1">Catalyzes the reversible isomerization of glucose-6-phosphate to fructose-6-phosphate.</text>
</comment>
<comment type="catalytic activity">
    <reaction evidence="1">
        <text>alpha-D-glucose 6-phosphate = beta-D-fructose 6-phosphate</text>
        <dbReference type="Rhea" id="RHEA:11816"/>
        <dbReference type="ChEBI" id="CHEBI:57634"/>
        <dbReference type="ChEBI" id="CHEBI:58225"/>
        <dbReference type="EC" id="5.3.1.9"/>
    </reaction>
</comment>
<comment type="pathway">
    <text evidence="1">Carbohydrate biosynthesis; gluconeogenesis.</text>
</comment>
<comment type="pathway">
    <text evidence="1">Carbohydrate degradation; glycolysis; D-glyceraldehyde 3-phosphate and glycerone phosphate from D-glucose: step 2/4.</text>
</comment>
<comment type="subcellular location">
    <subcellularLocation>
        <location evidence="1">Cytoplasm</location>
    </subcellularLocation>
</comment>
<comment type="similarity">
    <text evidence="1 2">Belongs to the GPI family.</text>
</comment>
<gene>
    <name evidence="1" type="primary">pgi</name>
    <name type="synonym">gpi</name>
    <name type="ordered locus">TP_0475</name>
</gene>
<sequence length="535" mass="58418">MNWRNLDECAAYARLQAIRAPSLKTVLCGPEGIERVRRYCTDAGAGLRYHYAAKTVNEEILTALAALADEQELVAKYDALRAGAQINTGEKRKVLHHLTRLGVQGSSLASLPCEVRDMHAFYTKEYERVCAFARQVHEGGLRTSRGAPFTDVVQIGIGGSDLGPRALYLALEGWAQRHQAVKMRTHFISNVDPDDAALVLSKLPLETTLFILVSKSGTTLETLSNELFVAHVLRQAGLEPHTQFVAVTSETSPLANNPQYLASFYMDDFIGGRYSSSSVCGAVVLTLAFGPQVFGHFLSGAAEADRAAQEQDIRRNAALLDALIGVYERTILGYEHTAVLPYSQALARFPAHLQQLDMESNGKSVNRFGIPITYKTGPVIFGEPGTNGQHSFYQHLHQGTSVVPLQFIAFQHSQLGQDPIIRGSTGQQKLLANVVAQIVAFARGKEHADANKTFSGERPSSLLYAKALTPQTLGALLAHFENKIMFQGFAWNLNSFDQEGVQLGKTLAQHILAGEVEGVLRAYADLFDLAHAPTC</sequence>
<protein>
    <recommendedName>
        <fullName evidence="1">Glucose-6-phosphate isomerase</fullName>
        <shortName evidence="1">GPI</shortName>
        <ecNumber evidence="1">5.3.1.9</ecNumber>
    </recommendedName>
    <alternativeName>
        <fullName evidence="1">Phosphoglucose isomerase</fullName>
        <shortName evidence="1">PGI</shortName>
    </alternativeName>
    <alternativeName>
        <fullName evidence="1">Phosphohexose isomerase</fullName>
        <shortName evidence="1">PHI</shortName>
    </alternativeName>
</protein>